<dbReference type="EMBL" id="AF295543">
    <property type="protein sequence ID" value="AAL49398.1"/>
    <property type="molecule type" value="Genomic_RNA"/>
</dbReference>
<dbReference type="EMBL" id="AF295544">
    <property type="protein sequence ID" value="AAL49409.1"/>
    <property type="molecule type" value="Genomic_RNA"/>
</dbReference>
<dbReference type="PIR" id="JQ2284">
    <property type="entry name" value="JQ2284"/>
</dbReference>
<dbReference type="SMR" id="P62648"/>
<dbReference type="GlyCosmos" id="P62648">
    <property type="glycosylation" value="13 sites, No reported glycans"/>
</dbReference>
<dbReference type="Proteomes" id="UP000007616">
    <property type="component" value="Genome"/>
</dbReference>
<dbReference type="GO" id="GO:0005576">
    <property type="term" value="C:extracellular region"/>
    <property type="evidence" value="ECO:0007669"/>
    <property type="project" value="UniProtKB-SubCell"/>
</dbReference>
<dbReference type="GO" id="GO:0020002">
    <property type="term" value="C:host cell plasma membrane"/>
    <property type="evidence" value="ECO:0007669"/>
    <property type="project" value="UniProtKB-SubCell"/>
</dbReference>
<dbReference type="GO" id="GO:0016020">
    <property type="term" value="C:membrane"/>
    <property type="evidence" value="ECO:0007669"/>
    <property type="project" value="UniProtKB-KW"/>
</dbReference>
<dbReference type="GO" id="GO:0055036">
    <property type="term" value="C:virion membrane"/>
    <property type="evidence" value="ECO:0007669"/>
    <property type="project" value="UniProtKB-SubCell"/>
</dbReference>
<dbReference type="GO" id="GO:0046718">
    <property type="term" value="P:symbiont entry into host cell"/>
    <property type="evidence" value="ECO:0007669"/>
    <property type="project" value="UniProtKB-KW"/>
</dbReference>
<dbReference type="GO" id="GO:0019062">
    <property type="term" value="P:virion attachment to host cell"/>
    <property type="evidence" value="ECO:0007669"/>
    <property type="project" value="UniProtKB-KW"/>
</dbReference>
<dbReference type="InterPro" id="IPR000925">
    <property type="entry name" value="G_prot"/>
</dbReference>
<dbReference type="Pfam" id="PF00802">
    <property type="entry name" value="Glycoprotein_G"/>
    <property type="match status" value="1"/>
</dbReference>
<accession>P62648</accession>
<accession>Q77KZ8</accession>
<accession>Q8V689</accession>
<feature type="chain" id="PRO_0000142847" description="Major surface glycoprotein G">
    <location>
        <begin position="1"/>
        <end position="263"/>
    </location>
</feature>
<feature type="chain" id="PRO_0000451316" description="Mature secreted glycoprotein G">
    <location>
        <begin position="66"/>
        <end position="263"/>
    </location>
</feature>
<feature type="topological domain" description="Cytoplasmic" evidence="3">
    <location>
        <begin position="1"/>
        <end position="37"/>
    </location>
</feature>
<feature type="transmembrane region" description="Helical" evidence="3">
    <location>
        <begin position="38"/>
        <end position="66"/>
    </location>
</feature>
<feature type="topological domain" description="Extracellular" evidence="3">
    <location>
        <begin position="67"/>
        <end position="263"/>
    </location>
</feature>
<feature type="region of interest" description="Disordered" evidence="4">
    <location>
        <begin position="69"/>
        <end position="166"/>
    </location>
</feature>
<feature type="region of interest" description="Binding to host heparan sulfate" evidence="5">
    <location>
        <begin position="187"/>
        <end position="198"/>
    </location>
</feature>
<feature type="region of interest" description="Disordered" evidence="4">
    <location>
        <begin position="223"/>
        <end position="263"/>
    </location>
</feature>
<feature type="compositionally biased region" description="Low complexity" evidence="4">
    <location>
        <begin position="72"/>
        <end position="92"/>
    </location>
</feature>
<feature type="compositionally biased region" description="Low complexity" evidence="4">
    <location>
        <begin position="100"/>
        <end position="110"/>
    </location>
</feature>
<feature type="compositionally biased region" description="Polar residues" evidence="4">
    <location>
        <begin position="111"/>
        <end position="121"/>
    </location>
</feature>
<feature type="compositionally biased region" description="Polar residues" evidence="4">
    <location>
        <begin position="151"/>
        <end position="166"/>
    </location>
</feature>
<feature type="compositionally biased region" description="Polar residues" evidence="4">
    <location>
        <begin position="232"/>
        <end position="263"/>
    </location>
</feature>
<feature type="site" description="Cleavage" evidence="1">
    <location>
        <begin position="65"/>
        <end position="66"/>
    </location>
</feature>
<feature type="glycosylation site" description="O-linked (GalNAc...) threonine; by host" evidence="1">
    <location>
        <position position="72"/>
    </location>
</feature>
<feature type="glycosylation site" description="O-linked (GalNAc...) threonine; by host" evidence="1">
    <location>
        <position position="80"/>
    </location>
</feature>
<feature type="glycosylation site" description="O-linked (GalNAc...) threonine; by host" evidence="1">
    <location>
        <position position="87"/>
    </location>
</feature>
<feature type="glycosylation site" description="O-linked (GalNAc...) threonine; by host" evidence="1">
    <location>
        <position position="92"/>
    </location>
</feature>
<feature type="glycosylation site" description="O-linked (GalNAc...) serine; by host" evidence="3">
    <location>
        <position position="105"/>
    </location>
</feature>
<feature type="glycosylation site" description="N-linked (GlcNAc...) asparagine; by host" evidence="3">
    <location>
        <position position="127"/>
    </location>
</feature>
<feature type="glycosylation site" description="O-linked (GalNAc...) threonine; by host" evidence="3">
    <location>
        <position position="139"/>
    </location>
</feature>
<feature type="glycosylation site" description="N-linked (GlcNAc...) asparagine; by host" evidence="3">
    <location>
        <position position="163"/>
    </location>
</feature>
<feature type="glycosylation site" description="O-linked (GalNAc...) threonine; by host" evidence="3">
    <location>
        <position position="199"/>
    </location>
</feature>
<feature type="glycosylation site" description="O-linked (GalNAc...) threonine; by host" evidence="3">
    <location>
        <position position="215"/>
    </location>
</feature>
<feature type="glycosylation site" description="O-linked (GalNAc...) threonine; by host" evidence="3">
    <location>
        <position position="231"/>
    </location>
</feature>
<feature type="glycosylation site" description="N-linked (GlcNAc...) asparagine; by host" evidence="3">
    <location>
        <position position="251"/>
    </location>
</feature>
<feature type="glycosylation site" description="O-linked (GalNAc...) serine; by host" evidence="3">
    <location>
        <position position="253"/>
    </location>
</feature>
<feature type="disulfide bond" evidence="1">
    <location>
        <begin position="173"/>
        <end position="186"/>
    </location>
</feature>
<feature type="disulfide bond" evidence="1">
    <location>
        <begin position="176"/>
        <end position="182"/>
    </location>
</feature>
<feature type="splice variant" id="VSP_036515" description="In isoform Secreted glycoprotein G." evidence="1">
    <location>
        <begin position="1"/>
        <end position="47"/>
    </location>
</feature>
<feature type="sequence variant" description="In strain: ATCC 51908.">
    <original>P</original>
    <variation>L</variation>
    <location>
        <position position="8"/>
    </location>
</feature>
<feature type="sequence variant">
    <original>I</original>
    <variation>T</variation>
    <location>
        <position position="24"/>
    </location>
</feature>
<feature type="sequence variant" description="In strain: ATCC 51908.">
    <original>S</original>
    <variation>T</variation>
    <location>
        <position position="45"/>
    </location>
</feature>
<feature type="sequence variant" description="In strain: ATCC 51908.">
    <original>T</original>
    <variation>I</variation>
    <location>
        <position position="77"/>
    </location>
</feature>
<feature type="sequence variant" description="In strain: ATCC 51908.">
    <original>PLLP</original>
    <variation>SPFF</variation>
    <location>
        <begin position="88"/>
        <end position="91"/>
    </location>
</feature>
<feature type="sequence variant" description="In strain: ATCC 51908.">
    <original>H</original>
    <variation>Y</variation>
    <location>
        <position position="96"/>
    </location>
</feature>
<feature type="sequence variant" description="In strain: ATCC 51908.">
    <original>T</original>
    <variation>I</variation>
    <location>
        <position position="103"/>
    </location>
</feature>
<feature type="sequence variant" description="In strain: ATCC 51908.">
    <original>P</original>
    <variation>L</variation>
    <location>
        <position position="111"/>
    </location>
</feature>
<feature type="sequence variant" description="In strain: ATCC 51908.">
    <original>I</original>
    <variation>T</variation>
    <location>
        <position position="114"/>
    </location>
</feature>
<feature type="sequence variant" description="In strain: ATCC 51908.">
    <original>SG</original>
    <variation>RE</variation>
    <location>
        <begin position="118"/>
        <end position="119"/>
    </location>
</feature>
<feature type="sequence variant" description="In strain: ATCC 51908.">
    <original>GHPINR</original>
    <variation>SHSINE</variation>
    <location>
        <begin position="123"/>
        <end position="128"/>
    </location>
</feature>
<feature type="sequence variant" description="In strain: ATCC 51908.">
    <original>PL</original>
    <variation>LP</variation>
    <location>
        <begin position="140"/>
        <end position="141"/>
    </location>
</feature>
<feature type="sequence variant" description="In strain: ATCC 51908.">
    <original>L</original>
    <variation>P</variation>
    <location>
        <position position="146"/>
    </location>
</feature>
<feature type="sequence variant" description="In strain: ATCC 51908.">
    <original>LE</original>
    <variation>SG</variation>
    <location>
        <begin position="151"/>
        <end position="152"/>
    </location>
</feature>
<feature type="sequence variant" description="In strain: ATCC 51908.">
    <original>H</original>
    <variation>Y</variation>
    <location>
        <position position="170"/>
    </location>
</feature>
<feature type="sequence variant" description="In strain: ATCC 51908.">
    <original>P</original>
    <variation>L</variation>
    <location>
        <position position="180"/>
    </location>
</feature>
<feature type="sequence variant" description="In strain: ATCC 51908.">
    <original>SP</original>
    <variation>LS</variation>
    <location>
        <begin position="183"/>
        <end position="184"/>
    </location>
</feature>
<feature type="sequence variant" description="In strain: ATCC 51908.">
    <original>L</original>
    <variation>P</variation>
    <location>
        <position position="190"/>
    </location>
</feature>
<feature type="sequence variant" description="In strain: ATCC 51908.">
    <original>A</original>
    <variation>T</variation>
    <location>
        <position position="205"/>
    </location>
</feature>
<feature type="sequence variant" description="In strain: ATCC 51908.">
    <original>Y</original>
    <variation>H</variation>
    <location>
        <position position="220"/>
    </location>
</feature>
<feature type="sequence variant" description="In strain: ATCC 51908.">
    <original>TKK</original>
    <variation>PKN</variation>
    <location>
        <begin position="231"/>
        <end position="233"/>
    </location>
</feature>
<feature type="sequence variant" description="In strain: ATCC 51908.">
    <original>T</original>
    <variation>A</variation>
    <location>
        <position position="237"/>
    </location>
</feature>
<feature type="sequence variant" description="In strain: ATCC 51908.">
    <original>Q</original>
    <variation>H</variation>
    <location>
        <position position="249"/>
    </location>
</feature>
<organismHost>
    <name type="scientific">Bos taurus</name>
    <name type="common">Bovine</name>
    <dbReference type="NCBI Taxonomy" id="9913"/>
</organismHost>
<organism>
    <name type="scientific">Bovine respiratory syncytial virus (strain A51908)</name>
    <name type="common">BRS</name>
    <dbReference type="NCBI Taxonomy" id="11247"/>
    <lineage>
        <taxon>Viruses</taxon>
        <taxon>Riboviria</taxon>
        <taxon>Orthornavirae</taxon>
        <taxon>Negarnaviricota</taxon>
        <taxon>Haploviricotina</taxon>
        <taxon>Monjiviricetes</taxon>
        <taxon>Mononegavirales</taxon>
        <taxon>Pneumoviridae</taxon>
        <taxon>Orthopneumovirus</taxon>
        <taxon>Orthopneumovirus bovis</taxon>
        <taxon>bovine respiratory syncytial virus</taxon>
    </lineage>
</organism>
<sequence length="263" mass="28964">MSNHTHHPKFKTLKRAWKASKYFIVGLSCLYKFNLKSLVQTALTSLAMITLTSLVITAIIYISVGNAKAKPTSKPTTQQTQQPQNHTPLLPTEHNHKSTHTSTQSTTLSQPPNIDTTSGTTYGHPINRTQNRKIKSQSTPLATRKLPINPLESNPPENHQDHNNSQTLPHVPCSTCEGNPACSPLCQIGLERAPSRAPTITLKKAPKPKTTKKPTKTTIYHRTSPEAKLQTKKNTATPQQGILSSPEHQTNQSTTQISQHTSI</sequence>
<name>GLYC_BRSVA</name>
<gene>
    <name type="primary">G</name>
</gene>
<protein>
    <recommendedName>
        <fullName>Major surface glycoprotein G</fullName>
    </recommendedName>
    <alternativeName>
        <fullName>Attachment glycoprotein G</fullName>
    </alternativeName>
    <alternativeName>
        <fullName>Membrane-bound glycoprotein</fullName>
        <shortName>mG</shortName>
    </alternativeName>
    <component>
        <recommendedName>
            <fullName evidence="2">Mature secreted glycoprotein G</fullName>
            <shortName evidence="2">Mature sG</shortName>
        </recommendedName>
    </component>
</protein>
<evidence type="ECO:0000250" key="1">
    <source>
        <dbReference type="UniProtKB" id="P03423"/>
    </source>
</evidence>
<evidence type="ECO:0000250" key="2">
    <source>
        <dbReference type="UniProtKB" id="P20895"/>
    </source>
</evidence>
<evidence type="ECO:0000255" key="3"/>
<evidence type="ECO:0000256" key="4">
    <source>
        <dbReference type="SAM" id="MobiDB-lite"/>
    </source>
</evidence>
<evidence type="ECO:0000269" key="5">
    <source>
    </source>
</evidence>
<evidence type="ECO:0000305" key="6"/>
<comment type="function">
    <molecule>Isoform Membrane-bound glycoprotein G</molecule>
    <text evidence="1">Attaches the virion to the host cell membrane by interacting with heparan sulfate, initiating the infection. Unlike the other paramyxovirus attachment proteins, lacks both neuraminidase and hemagglutinating activities.</text>
</comment>
<comment type="function">
    <molecule>Isoform Secreted glycoprotein G</molecule>
    <text evidence="1">Helps the virus escape antibody-dependent restriction of replication by acting as an antigen decoy and by modulating the activity of leukocytes bearing Fc-gamma receptors.</text>
</comment>
<comment type="subunit">
    <molecule>Isoform Membrane-bound glycoprotein G</molecule>
    <text evidence="1">Homooligomer. Interacts (via N-terminus) with protein M. Part of a complex composed of F1, F2 and G glycoproteins. Interacts with protein SH. Interacts with host heparate sulfate; this interaction probably participates in the viral attachment to the host cell.</text>
</comment>
<comment type="subcellular location">
    <molecule>Isoform Membrane-bound glycoprotein G</molecule>
    <subcellularLocation>
        <location evidence="1">Virion membrane</location>
        <topology evidence="1">Single-pass type II membrane protein</topology>
    </subcellularLocation>
    <subcellularLocation>
        <location evidence="1">Host cell membrane</location>
        <topology evidence="1">Single-pass type II membrane protein</topology>
    </subcellularLocation>
</comment>
<comment type="subcellular location">
    <molecule>Isoform Secreted glycoprotein G</molecule>
    <subcellularLocation>
        <location evidence="2">Secreted</location>
    </subcellularLocation>
    <text evidence="2">The protein is shed from infected cells before the appearance of progeny virus. The initiation at the downstream methionine removes a portion of the transmembrane domain. The remaining hydrophobic portion of the sG protein is essential for translocating it into the lumen of the ER during translation and would likely maintain its membrane association until a proteolytic event releases the mature sG protein into the medium.</text>
</comment>
<comment type="alternative products">
    <event type="alternative initiation"/>
    <isoform>
        <id>P62648-1</id>
        <name>Membrane-bound glycoprotein G</name>
        <sequence type="displayed"/>
    </isoform>
    <isoform>
        <id>P62648-2</id>
        <name>Secreted glycoprotein G</name>
        <sequence type="described" ref="VSP_036515"/>
    </isoform>
</comment>
<comment type="domain">
    <molecule>Isoform Membrane-bound glycoprotein G</molecule>
    <text evidence="1">Contains a linear heparin binding domain essential for virus attachment to the host.</text>
</comment>
<comment type="PTM">
    <molecule>Isoform Secreted glycoprotein G</molecule>
    <text evidence="2">Cleaved to give rise to the mature sG protein which lacks the transmembrane domain.</text>
</comment>
<comment type="PTM">
    <molecule>Isoform Membrane-bound glycoprotein G</molecule>
    <text evidence="1">N- and O-glycosylated. May carry 30-40 separate O-linked carbohydrate chains distributed among the serine and threonine residues.</text>
</comment>
<comment type="PTM">
    <molecule>Isoform Membrane-bound glycoprotein G</molecule>
    <text evidence="1">Palmitoylated.</text>
</comment>
<comment type="similarity">
    <text evidence="6">Belongs to the pneumoviruses glycoprotein G family.</text>
</comment>
<keyword id="KW-0024">Alternative initiation</keyword>
<keyword id="KW-1015">Disulfide bond</keyword>
<keyword id="KW-0325">Glycoprotein</keyword>
<keyword id="KW-1032">Host cell membrane</keyword>
<keyword id="KW-1043">Host membrane</keyword>
<keyword id="KW-0945">Host-virus interaction</keyword>
<keyword id="KW-0472">Membrane</keyword>
<keyword id="KW-1185">Reference proteome</keyword>
<keyword id="KW-0964">Secreted</keyword>
<keyword id="KW-0812">Transmembrane</keyword>
<keyword id="KW-1133">Transmembrane helix</keyword>
<keyword id="KW-1161">Viral attachment to host cell</keyword>
<keyword id="KW-0899">Viral immunoevasion</keyword>
<keyword id="KW-0946">Virion</keyword>
<keyword id="KW-1160">Virus entry into host cell</keyword>
<proteinExistence type="evidence at protein level"/>
<reference key="1">
    <citation type="journal article" date="1993" name="J. Gen. Virol.">
        <title>Sequence variability of the glycoprotein gene of bovine respiratory syncytial virus.</title>
        <authorList>
            <person name="Mallipeddi S.K."/>
            <person name="Samal S.K."/>
        </authorList>
    </citation>
    <scope>NUCLEOTIDE SEQUENCE [GENOMIC RNA]</scope>
</reference>
<reference key="2">
    <citation type="journal article" date="2001" name="Virus Genes">
        <title>Rescue of bovine respiratory syncytial virus from cloned cDNA: entire genome sequence of BRSV strain A51908.</title>
        <authorList>
            <person name="Yunus A.S."/>
            <person name="Khattar S.K."/>
            <person name="Collins P.L."/>
            <person name="Samal S.K."/>
        </authorList>
    </citation>
    <scope>NUCLEOTIDE SEQUENCE [GENOMIC RNA]</scope>
    <source>
        <strain>A51908</strain>
        <strain>ATCC 51908</strain>
    </source>
</reference>
<reference key="3">
    <citation type="journal article" date="2001" name="J. Gen. Virol.">
        <title>Recombinant bovine respiratory syncytial virus with deletions of the G or SH genes: G and F proteins bind heparin.</title>
        <authorList>
            <person name="Karger A."/>
            <person name="Schmidt U."/>
            <person name="Buchholz U.J."/>
        </authorList>
    </citation>
    <scope>FUNCTION (ISOFORM MEMBRANE-BOUND GLYCOPROTEIN G)</scope>
    <scope>INTERACTION WITH HOST HEPARATE SULFATE (ISOFORM MEMBRANE-BOUND GLYCOPROTEIN G)</scope>
</reference>